<protein>
    <recommendedName>
        <fullName evidence="1">Energy-coupling factor transporter ATP-binding protein EcfA2</fullName>
        <shortName evidence="1">ECF transporter A component EcfA2</shortName>
        <ecNumber evidence="1">7.-.-.-</ecNumber>
    </recommendedName>
</protein>
<feature type="chain" id="PRO_0000288011" description="Energy-coupling factor transporter ATP-binding protein EcfA2">
    <location>
        <begin position="1"/>
        <end position="280"/>
    </location>
</feature>
<feature type="domain" description="ABC transporter" evidence="1">
    <location>
        <begin position="3"/>
        <end position="245"/>
    </location>
</feature>
<feature type="binding site" evidence="1">
    <location>
        <begin position="40"/>
        <end position="47"/>
    </location>
    <ligand>
        <name>ATP</name>
        <dbReference type="ChEBI" id="CHEBI:30616"/>
    </ligand>
</feature>
<sequence>MGISLENVSYTYQSGTPFERRALFDMTVTIKDGSYTAFIGHTGSGKSTIMQLLNGLYLPTSGQVKVDDTIINSQSKNKEIKPIRKKVGLVFQFPESQLFAETVLEDIAFGPQNFGVSKEEAEQRALESLRLVGLSDELRDQNPFDLSGGQMRRVAIAGILAMQPDILVLDEPTAGLDPQGRKELMSLFKQLHLSGITIVLVTHLMDDVADYATAVNVMEKGRLVLSGTPKDVFQKVAFLKEKQLGVPKITEFALQLQEKGYSFESLPITIEEFVEVLVHG</sequence>
<gene>
    <name evidence="1" type="primary">ecfA2</name>
    <name type="synonym">cbiO2</name>
    <name type="ordered locus">STER_1984</name>
</gene>
<proteinExistence type="inferred from homology"/>
<name>ECFA2_STRTD</name>
<evidence type="ECO:0000255" key="1">
    <source>
        <dbReference type="HAMAP-Rule" id="MF_01710"/>
    </source>
</evidence>
<comment type="function">
    <text evidence="1">ATP-binding (A) component of a common energy-coupling factor (ECF) ABC-transporter complex. Unlike classic ABC transporters this ECF transporter provides the energy necessary to transport a number of different substrates.</text>
</comment>
<comment type="subunit">
    <text evidence="1">Forms a stable energy-coupling factor (ECF) transporter complex composed of 2 membrane-embedded substrate-binding proteins (S component), 2 ATP-binding proteins (A component) and 2 transmembrane proteins (T component).</text>
</comment>
<comment type="subcellular location">
    <subcellularLocation>
        <location evidence="1">Cell membrane</location>
        <topology evidence="1">Peripheral membrane protein</topology>
    </subcellularLocation>
</comment>
<comment type="similarity">
    <text evidence="1">Belongs to the ABC transporter superfamily. Energy-coupling factor EcfA family.</text>
</comment>
<accession>Q03I83</accession>
<organism>
    <name type="scientific">Streptococcus thermophilus (strain ATCC BAA-491 / LMD-9)</name>
    <dbReference type="NCBI Taxonomy" id="322159"/>
    <lineage>
        <taxon>Bacteria</taxon>
        <taxon>Bacillati</taxon>
        <taxon>Bacillota</taxon>
        <taxon>Bacilli</taxon>
        <taxon>Lactobacillales</taxon>
        <taxon>Streptococcaceae</taxon>
        <taxon>Streptococcus</taxon>
    </lineage>
</organism>
<keyword id="KW-0067">ATP-binding</keyword>
<keyword id="KW-1003">Cell membrane</keyword>
<keyword id="KW-0472">Membrane</keyword>
<keyword id="KW-0547">Nucleotide-binding</keyword>
<keyword id="KW-1278">Translocase</keyword>
<keyword id="KW-0813">Transport</keyword>
<reference key="1">
    <citation type="journal article" date="2006" name="Proc. Natl. Acad. Sci. U.S.A.">
        <title>Comparative genomics of the lactic acid bacteria.</title>
        <authorList>
            <person name="Makarova K.S."/>
            <person name="Slesarev A."/>
            <person name="Wolf Y.I."/>
            <person name="Sorokin A."/>
            <person name="Mirkin B."/>
            <person name="Koonin E.V."/>
            <person name="Pavlov A."/>
            <person name="Pavlova N."/>
            <person name="Karamychev V."/>
            <person name="Polouchine N."/>
            <person name="Shakhova V."/>
            <person name="Grigoriev I."/>
            <person name="Lou Y."/>
            <person name="Rohksar D."/>
            <person name="Lucas S."/>
            <person name="Huang K."/>
            <person name="Goodstein D.M."/>
            <person name="Hawkins T."/>
            <person name="Plengvidhya V."/>
            <person name="Welker D."/>
            <person name="Hughes J."/>
            <person name="Goh Y."/>
            <person name="Benson A."/>
            <person name="Baldwin K."/>
            <person name="Lee J.-H."/>
            <person name="Diaz-Muniz I."/>
            <person name="Dosti B."/>
            <person name="Smeianov V."/>
            <person name="Wechter W."/>
            <person name="Barabote R."/>
            <person name="Lorca G."/>
            <person name="Altermann E."/>
            <person name="Barrangou R."/>
            <person name="Ganesan B."/>
            <person name="Xie Y."/>
            <person name="Rawsthorne H."/>
            <person name="Tamir D."/>
            <person name="Parker C."/>
            <person name="Breidt F."/>
            <person name="Broadbent J.R."/>
            <person name="Hutkins R."/>
            <person name="O'Sullivan D."/>
            <person name="Steele J."/>
            <person name="Unlu G."/>
            <person name="Saier M.H. Jr."/>
            <person name="Klaenhammer T."/>
            <person name="Richardson P."/>
            <person name="Kozyavkin S."/>
            <person name="Weimer B.C."/>
            <person name="Mills D.A."/>
        </authorList>
    </citation>
    <scope>NUCLEOTIDE SEQUENCE [LARGE SCALE GENOMIC DNA]</scope>
    <source>
        <strain>ATCC BAA-491 / LMD-9</strain>
    </source>
</reference>
<dbReference type="EC" id="7.-.-.-" evidence="1"/>
<dbReference type="EMBL" id="CP000419">
    <property type="protein sequence ID" value="ABJ67089.1"/>
    <property type="molecule type" value="Genomic_DNA"/>
</dbReference>
<dbReference type="RefSeq" id="WP_002947774.1">
    <property type="nucleotide sequence ID" value="NC_008532.1"/>
</dbReference>
<dbReference type="SMR" id="Q03I83"/>
<dbReference type="KEGG" id="ste:STER_1984"/>
<dbReference type="HOGENOM" id="CLU_000604_1_22_9"/>
<dbReference type="GO" id="GO:0043190">
    <property type="term" value="C:ATP-binding cassette (ABC) transporter complex"/>
    <property type="evidence" value="ECO:0007669"/>
    <property type="project" value="TreeGrafter"/>
</dbReference>
<dbReference type="GO" id="GO:0005524">
    <property type="term" value="F:ATP binding"/>
    <property type="evidence" value="ECO:0007669"/>
    <property type="project" value="UniProtKB-KW"/>
</dbReference>
<dbReference type="GO" id="GO:0016887">
    <property type="term" value="F:ATP hydrolysis activity"/>
    <property type="evidence" value="ECO:0007669"/>
    <property type="project" value="InterPro"/>
</dbReference>
<dbReference type="GO" id="GO:0042626">
    <property type="term" value="F:ATPase-coupled transmembrane transporter activity"/>
    <property type="evidence" value="ECO:0007669"/>
    <property type="project" value="TreeGrafter"/>
</dbReference>
<dbReference type="CDD" id="cd03225">
    <property type="entry name" value="ABC_cobalt_CbiO_domain1"/>
    <property type="match status" value="1"/>
</dbReference>
<dbReference type="FunFam" id="3.40.50.300:FF:000224">
    <property type="entry name" value="Energy-coupling factor transporter ATP-binding protein EcfA"/>
    <property type="match status" value="1"/>
</dbReference>
<dbReference type="Gene3D" id="3.40.50.300">
    <property type="entry name" value="P-loop containing nucleotide triphosphate hydrolases"/>
    <property type="match status" value="1"/>
</dbReference>
<dbReference type="InterPro" id="IPR003593">
    <property type="entry name" value="AAA+_ATPase"/>
</dbReference>
<dbReference type="InterPro" id="IPR003439">
    <property type="entry name" value="ABC_transporter-like_ATP-bd"/>
</dbReference>
<dbReference type="InterPro" id="IPR017871">
    <property type="entry name" value="ABC_transporter-like_CS"/>
</dbReference>
<dbReference type="InterPro" id="IPR015856">
    <property type="entry name" value="ABC_transpr_CbiO/EcfA_su"/>
</dbReference>
<dbReference type="InterPro" id="IPR050095">
    <property type="entry name" value="ECF_ABC_transporter_ATP-bd"/>
</dbReference>
<dbReference type="InterPro" id="IPR030946">
    <property type="entry name" value="EcfA2"/>
</dbReference>
<dbReference type="InterPro" id="IPR027417">
    <property type="entry name" value="P-loop_NTPase"/>
</dbReference>
<dbReference type="NCBIfam" id="TIGR04521">
    <property type="entry name" value="ECF_ATPase_2"/>
    <property type="match status" value="1"/>
</dbReference>
<dbReference type="NCBIfam" id="NF010155">
    <property type="entry name" value="PRK13634.1"/>
    <property type="match status" value="1"/>
</dbReference>
<dbReference type="PANTHER" id="PTHR43553:SF27">
    <property type="entry name" value="ENERGY-COUPLING FACTOR TRANSPORTER ATP-BINDING PROTEIN ECFA2"/>
    <property type="match status" value="1"/>
</dbReference>
<dbReference type="PANTHER" id="PTHR43553">
    <property type="entry name" value="HEAVY METAL TRANSPORTER"/>
    <property type="match status" value="1"/>
</dbReference>
<dbReference type="Pfam" id="PF00005">
    <property type="entry name" value="ABC_tran"/>
    <property type="match status" value="1"/>
</dbReference>
<dbReference type="SMART" id="SM00382">
    <property type="entry name" value="AAA"/>
    <property type="match status" value="1"/>
</dbReference>
<dbReference type="SUPFAM" id="SSF52540">
    <property type="entry name" value="P-loop containing nucleoside triphosphate hydrolases"/>
    <property type="match status" value="1"/>
</dbReference>
<dbReference type="PROSITE" id="PS00211">
    <property type="entry name" value="ABC_TRANSPORTER_1"/>
    <property type="match status" value="1"/>
</dbReference>
<dbReference type="PROSITE" id="PS50893">
    <property type="entry name" value="ABC_TRANSPORTER_2"/>
    <property type="match status" value="1"/>
</dbReference>
<dbReference type="PROSITE" id="PS51246">
    <property type="entry name" value="CBIO"/>
    <property type="match status" value="1"/>
</dbReference>